<keyword id="KW-0064">Aspartyl protease</keyword>
<keyword id="KW-0997">Cell inner membrane</keyword>
<keyword id="KW-1003">Cell membrane</keyword>
<keyword id="KW-0378">Hydrolase</keyword>
<keyword id="KW-0472">Membrane</keyword>
<keyword id="KW-0645">Protease</keyword>
<keyword id="KW-1185">Reference proteome</keyword>
<keyword id="KW-0812">Transmembrane</keyword>
<keyword id="KW-1133">Transmembrane helix</keyword>
<gene>
    <name evidence="1" type="primary">lspA</name>
    <name type="ordered locus">Msil_2861</name>
</gene>
<dbReference type="EC" id="3.4.23.36" evidence="1"/>
<dbReference type="EMBL" id="CP001280">
    <property type="protein sequence ID" value="ACK51778.1"/>
    <property type="molecule type" value="Genomic_DNA"/>
</dbReference>
<dbReference type="RefSeq" id="WP_012591847.1">
    <property type="nucleotide sequence ID" value="NC_011666.1"/>
</dbReference>
<dbReference type="SMR" id="B8ETD6"/>
<dbReference type="STRING" id="395965.Msil_2861"/>
<dbReference type="KEGG" id="msl:Msil_2861"/>
<dbReference type="eggNOG" id="COG0597">
    <property type="taxonomic scope" value="Bacteria"/>
</dbReference>
<dbReference type="HOGENOM" id="CLU_083252_4_3_5"/>
<dbReference type="OrthoDB" id="9810259at2"/>
<dbReference type="UniPathway" id="UPA00665"/>
<dbReference type="Proteomes" id="UP000002257">
    <property type="component" value="Chromosome"/>
</dbReference>
<dbReference type="GO" id="GO:0005886">
    <property type="term" value="C:plasma membrane"/>
    <property type="evidence" value="ECO:0007669"/>
    <property type="project" value="UniProtKB-SubCell"/>
</dbReference>
<dbReference type="GO" id="GO:0004190">
    <property type="term" value="F:aspartic-type endopeptidase activity"/>
    <property type="evidence" value="ECO:0007669"/>
    <property type="project" value="UniProtKB-UniRule"/>
</dbReference>
<dbReference type="GO" id="GO:0006508">
    <property type="term" value="P:proteolysis"/>
    <property type="evidence" value="ECO:0007669"/>
    <property type="project" value="UniProtKB-KW"/>
</dbReference>
<dbReference type="HAMAP" id="MF_00161">
    <property type="entry name" value="LspA"/>
    <property type="match status" value="1"/>
</dbReference>
<dbReference type="InterPro" id="IPR001872">
    <property type="entry name" value="Peptidase_A8"/>
</dbReference>
<dbReference type="NCBIfam" id="TIGR00077">
    <property type="entry name" value="lspA"/>
    <property type="match status" value="1"/>
</dbReference>
<dbReference type="PANTHER" id="PTHR33695">
    <property type="entry name" value="LIPOPROTEIN SIGNAL PEPTIDASE"/>
    <property type="match status" value="1"/>
</dbReference>
<dbReference type="PANTHER" id="PTHR33695:SF1">
    <property type="entry name" value="LIPOPROTEIN SIGNAL PEPTIDASE"/>
    <property type="match status" value="1"/>
</dbReference>
<dbReference type="Pfam" id="PF01252">
    <property type="entry name" value="Peptidase_A8"/>
    <property type="match status" value="1"/>
</dbReference>
<dbReference type="PRINTS" id="PR00781">
    <property type="entry name" value="LIPOSIGPTASE"/>
</dbReference>
<dbReference type="PROSITE" id="PS00855">
    <property type="entry name" value="SPASE_II"/>
    <property type="match status" value="1"/>
</dbReference>
<evidence type="ECO:0000255" key="1">
    <source>
        <dbReference type="HAMAP-Rule" id="MF_00161"/>
    </source>
</evidence>
<accession>B8ETD6</accession>
<protein>
    <recommendedName>
        <fullName evidence="1">Lipoprotein signal peptidase</fullName>
        <ecNumber evidence="1">3.4.23.36</ecNumber>
    </recommendedName>
    <alternativeName>
        <fullName evidence="1">Prolipoprotein signal peptidase</fullName>
    </alternativeName>
    <alternativeName>
        <fullName evidence="1">Signal peptidase II</fullName>
        <shortName evidence="1">SPase II</shortName>
    </alternativeName>
</protein>
<organism>
    <name type="scientific">Methylocella silvestris (strain DSM 15510 / CIP 108128 / LMG 27833 / NCIMB 13906 / BL2)</name>
    <dbReference type="NCBI Taxonomy" id="395965"/>
    <lineage>
        <taxon>Bacteria</taxon>
        <taxon>Pseudomonadati</taxon>
        <taxon>Pseudomonadota</taxon>
        <taxon>Alphaproteobacteria</taxon>
        <taxon>Hyphomicrobiales</taxon>
        <taxon>Beijerinckiaceae</taxon>
        <taxon>Methylocella</taxon>
    </lineage>
</organism>
<proteinExistence type="inferred from homology"/>
<name>LSPA_METSB</name>
<comment type="function">
    <text evidence="1">This protein specifically catalyzes the removal of signal peptides from prolipoproteins.</text>
</comment>
<comment type="catalytic activity">
    <reaction evidence="1">
        <text>Release of signal peptides from bacterial membrane prolipoproteins. Hydrolyzes -Xaa-Yaa-Zaa-|-(S,diacylglyceryl)Cys-, in which Xaa is hydrophobic (preferably Leu), and Yaa (Ala or Ser) and Zaa (Gly or Ala) have small, neutral side chains.</text>
        <dbReference type="EC" id="3.4.23.36"/>
    </reaction>
</comment>
<comment type="pathway">
    <text evidence="1">Protein modification; lipoprotein biosynthesis (signal peptide cleavage).</text>
</comment>
<comment type="subcellular location">
    <subcellularLocation>
        <location evidence="1">Cell inner membrane</location>
        <topology evidence="1">Multi-pass membrane protein</topology>
    </subcellularLocation>
</comment>
<comment type="similarity">
    <text evidence="1">Belongs to the peptidase A8 family.</text>
</comment>
<reference key="1">
    <citation type="journal article" date="2010" name="J. Bacteriol.">
        <title>Complete genome sequence of the aerobic facultative methanotroph Methylocella silvestris BL2.</title>
        <authorList>
            <person name="Chen Y."/>
            <person name="Crombie A."/>
            <person name="Rahman M.T."/>
            <person name="Dedysh S.N."/>
            <person name="Liesack W."/>
            <person name="Stott M.B."/>
            <person name="Alam M."/>
            <person name="Theisen A.R."/>
            <person name="Murrell J.C."/>
            <person name="Dunfield P.F."/>
        </authorList>
    </citation>
    <scope>NUCLEOTIDE SEQUENCE [LARGE SCALE GENOMIC DNA]</scope>
    <source>
        <strain>DSM 15510 / CIP 108128 / LMG 27833 / NCIMB 13906 / BL2</strain>
    </source>
</reference>
<feature type="chain" id="PRO_1000123501" description="Lipoprotein signal peptidase">
    <location>
        <begin position="1"/>
        <end position="171"/>
    </location>
</feature>
<feature type="transmembrane region" description="Helical" evidence="1">
    <location>
        <begin position="67"/>
        <end position="87"/>
    </location>
</feature>
<feature type="transmembrane region" description="Helical" evidence="1">
    <location>
        <begin position="88"/>
        <end position="108"/>
    </location>
</feature>
<feature type="transmembrane region" description="Helical" evidence="1">
    <location>
        <begin position="127"/>
        <end position="147"/>
    </location>
</feature>
<feature type="active site" evidence="1">
    <location>
        <position position="118"/>
    </location>
</feature>
<feature type="active site" evidence="1">
    <location>
        <position position="136"/>
    </location>
</feature>
<sequence>MSPRVLGALVAALTLAADQANKLWLIFVYGIEQRQPIALAPFLDVVYAKNPGISYSLLSARTDFQRYALLGLTLAATIFMILWLWRSTSKLIACALGLIIGGALGNAYDRAAYGFVADFYHFHVGSFSWYVFNLADAAIVAGVALLLYDSLFSARGAGTGGKSRGEGASAL</sequence>